<comment type="function">
    <text evidence="1">Beta-glucosidases are one of a number of cellulolytic enzymes involved in the degradation of cellulosic biomass. Catalyzes the last step releasing glucose from the inhibitory cellobiose (By similarity).</text>
</comment>
<comment type="catalytic activity">
    <reaction>
        <text>Hydrolysis of terminal, non-reducing beta-D-glucosyl residues with release of beta-D-glucose.</text>
        <dbReference type="EC" id="3.2.1.21"/>
    </reaction>
</comment>
<comment type="pathway">
    <text>Glycan metabolism; cellulose degradation.</text>
</comment>
<comment type="subcellular location">
    <subcellularLocation>
        <location evidence="1">Secreted</location>
    </subcellularLocation>
</comment>
<comment type="similarity">
    <text evidence="3">Belongs to the glycosyl hydrolase 3 family.</text>
</comment>
<accession>A1DC16</accession>
<sequence length="817" mass="88967">MASIAHLIFSGLLAATVANSQQYEGSSRNEDAFNYVQPRNTTIFGQYGHSPAVLPSPNSTGLGEWHAAYAKAREFVSLLTLEEKADMVTGQPGPCVGNIVAIPRLGFNGLCLQDGPMAIRVADYASVFSAGVTAASTWDRDILYERAFAMGQEFRAKGAHIALSPVAGPLGRSAYGGRNWEGFAADPYLTGIAMELSVQGYHDAGVQATPKHFIGNEQETQRNPTFDPNGTVTDVLQEALSSNIDDRTMHELYLWPFANAAHAKAASFMCSYQRLNGSYACQNSKVLNGLLKEELGFQGYVMSDWGGTHSGVASIEAGLDMNMPGGLGPYGTIPEAGSFFGGNVTQAVKNGTVDEARVDDMIVRIMTPYYWLGQDQDFPSVDPSSADLNTFSPRSTWLREFNLTGERSRDVRGDHAKLIRRHGAEATILLKNENNALPLKSPKALAIFGNDAGEPTMGAVNKANFEFGTLAAGGGSGTGRFTYVVSSLEAIKSRAKRANTLVQYWLNNTEVATTDVTTLWVPTPPDACLVFLKTWAEEGEDREHLSVDYDGNNVVFSVARKCNNTIVITHSSGINELPFADHPNVTAILAAHYPGQESGNSIVDVLYGDVNPSGRLPYTIARNGSDYNAPPTTEIATTGKEDWQAWFDEKLEIDYRYFDAHNISVLYEFGFGLSYTTFNLSDINAEPLVKSISSVPEQLPIQPGGNPALWENVYNVSVVVTNSGDVKGKAVPQLYVTFPDNTPAGTPPKQLRGFDKVPLKPGESRAVSFQLMRRDLSYWDVVSQQWLIPEGEFVIRVGFSSRDLREMIRITPVTDST</sequence>
<proteinExistence type="inferred from homology"/>
<keyword id="KW-0119">Carbohydrate metabolism</keyword>
<keyword id="KW-0136">Cellulose degradation</keyword>
<keyword id="KW-0325">Glycoprotein</keyword>
<keyword id="KW-0326">Glycosidase</keyword>
<keyword id="KW-0378">Hydrolase</keyword>
<keyword id="KW-0624">Polysaccharide degradation</keyword>
<keyword id="KW-1185">Reference proteome</keyword>
<keyword id="KW-0964">Secreted</keyword>
<keyword id="KW-0732">Signal</keyword>
<gene>
    <name type="primary">bglG</name>
    <name type="ORF">NFIA_100430</name>
</gene>
<evidence type="ECO:0000250" key="1"/>
<evidence type="ECO:0000255" key="2"/>
<evidence type="ECO:0000305" key="3"/>
<organism>
    <name type="scientific">Neosartorya fischeri (strain ATCC 1020 / DSM 3700 / CBS 544.65 / FGSC A1164 / JCM 1740 / NRRL 181 / WB 181)</name>
    <name type="common">Aspergillus fischerianus</name>
    <dbReference type="NCBI Taxonomy" id="331117"/>
    <lineage>
        <taxon>Eukaryota</taxon>
        <taxon>Fungi</taxon>
        <taxon>Dikarya</taxon>
        <taxon>Ascomycota</taxon>
        <taxon>Pezizomycotina</taxon>
        <taxon>Eurotiomycetes</taxon>
        <taxon>Eurotiomycetidae</taxon>
        <taxon>Eurotiales</taxon>
        <taxon>Aspergillaceae</taxon>
        <taxon>Aspergillus</taxon>
        <taxon>Aspergillus subgen. Fumigati</taxon>
    </lineage>
</organism>
<reference key="1">
    <citation type="journal article" date="2008" name="PLoS Genet.">
        <title>Genomic islands in the pathogenic filamentous fungus Aspergillus fumigatus.</title>
        <authorList>
            <person name="Fedorova N.D."/>
            <person name="Khaldi N."/>
            <person name="Joardar V.S."/>
            <person name="Maiti R."/>
            <person name="Amedeo P."/>
            <person name="Anderson M.J."/>
            <person name="Crabtree J."/>
            <person name="Silva J.C."/>
            <person name="Badger J.H."/>
            <person name="Albarraq A."/>
            <person name="Angiuoli S."/>
            <person name="Bussey H."/>
            <person name="Bowyer P."/>
            <person name="Cotty P.J."/>
            <person name="Dyer P.S."/>
            <person name="Egan A."/>
            <person name="Galens K."/>
            <person name="Fraser-Liggett C.M."/>
            <person name="Haas B.J."/>
            <person name="Inman J.M."/>
            <person name="Kent R."/>
            <person name="Lemieux S."/>
            <person name="Malavazi I."/>
            <person name="Orvis J."/>
            <person name="Roemer T."/>
            <person name="Ronning C.M."/>
            <person name="Sundaram J.P."/>
            <person name="Sutton G."/>
            <person name="Turner G."/>
            <person name="Venter J.C."/>
            <person name="White O.R."/>
            <person name="Whitty B.R."/>
            <person name="Youngman P."/>
            <person name="Wolfe K.H."/>
            <person name="Goldman G.H."/>
            <person name="Wortman J.R."/>
            <person name="Jiang B."/>
            <person name="Denning D.W."/>
            <person name="Nierman W.C."/>
        </authorList>
    </citation>
    <scope>NUCLEOTIDE SEQUENCE [LARGE SCALE GENOMIC DNA]</scope>
    <source>
        <strain>ATCC 1020 / DSM 3700 / CBS 544.65 / FGSC A1164 / JCM 1740 / NRRL 181 / WB 181</strain>
    </source>
</reference>
<name>BGLG_NEOFI</name>
<protein>
    <recommendedName>
        <fullName>Probable beta-glucosidase G</fullName>
        <ecNumber>3.2.1.21</ecNumber>
    </recommendedName>
    <alternativeName>
        <fullName>Beta-D-glucoside glucohydrolase G</fullName>
    </alternativeName>
    <alternativeName>
        <fullName>Cellobiase G</fullName>
    </alternativeName>
    <alternativeName>
        <fullName>Gentiobiase G</fullName>
    </alternativeName>
</protein>
<feature type="signal peptide" evidence="2">
    <location>
        <begin position="1"/>
        <end position="20"/>
    </location>
</feature>
<feature type="chain" id="PRO_0000394120" description="Probable beta-glucosidase G">
    <location>
        <begin position="21"/>
        <end position="817"/>
    </location>
</feature>
<feature type="active site" evidence="1">
    <location>
        <position position="304"/>
    </location>
</feature>
<feature type="glycosylation site" description="N-linked (GlcNAc...) asparagine" evidence="2">
    <location>
        <position position="40"/>
    </location>
</feature>
<feature type="glycosylation site" description="N-linked (GlcNAc...) asparagine" evidence="2">
    <location>
        <position position="58"/>
    </location>
</feature>
<feature type="glycosylation site" description="N-linked (GlcNAc...) asparagine" evidence="2">
    <location>
        <position position="229"/>
    </location>
</feature>
<feature type="glycosylation site" description="N-linked (GlcNAc...) asparagine" evidence="2">
    <location>
        <position position="276"/>
    </location>
</feature>
<feature type="glycosylation site" description="N-linked (GlcNAc...) asparagine" evidence="2">
    <location>
        <position position="343"/>
    </location>
</feature>
<feature type="glycosylation site" description="N-linked (GlcNAc...) asparagine" evidence="2">
    <location>
        <position position="350"/>
    </location>
</feature>
<feature type="glycosylation site" description="N-linked (GlcNAc...) asparagine" evidence="2">
    <location>
        <position position="402"/>
    </location>
</feature>
<feature type="glycosylation site" description="N-linked (GlcNAc...) asparagine" evidence="2">
    <location>
        <position position="507"/>
    </location>
</feature>
<feature type="glycosylation site" description="N-linked (GlcNAc...) asparagine" evidence="2">
    <location>
        <position position="563"/>
    </location>
</feature>
<feature type="glycosylation site" description="N-linked (GlcNAc...) asparagine" evidence="2">
    <location>
        <position position="584"/>
    </location>
</feature>
<feature type="glycosylation site" description="N-linked (GlcNAc...) asparagine" evidence="2">
    <location>
        <position position="623"/>
    </location>
</feature>
<feature type="glycosylation site" description="N-linked (GlcNAc...) asparagine" evidence="2">
    <location>
        <position position="662"/>
    </location>
</feature>
<feature type="glycosylation site" description="N-linked (GlcNAc...) asparagine" evidence="2">
    <location>
        <position position="679"/>
    </location>
</feature>
<feature type="glycosylation site" description="N-linked (GlcNAc...) asparagine" evidence="2">
    <location>
        <position position="715"/>
    </location>
</feature>
<dbReference type="EC" id="3.2.1.21"/>
<dbReference type="EMBL" id="DS027694">
    <property type="protein sequence ID" value="EAW20406.1"/>
    <property type="molecule type" value="Genomic_DNA"/>
</dbReference>
<dbReference type="RefSeq" id="XP_001262303.1">
    <property type="nucleotide sequence ID" value="XM_001262302.1"/>
</dbReference>
<dbReference type="SMR" id="A1DC16"/>
<dbReference type="STRING" id="331117.A1DC16"/>
<dbReference type="GlyCosmos" id="A1DC16">
    <property type="glycosylation" value="14 sites, No reported glycans"/>
</dbReference>
<dbReference type="EnsemblFungi" id="EAW20406">
    <property type="protein sequence ID" value="EAW20406"/>
    <property type="gene ID" value="NFIA_100430"/>
</dbReference>
<dbReference type="GeneID" id="4588637"/>
<dbReference type="KEGG" id="nfi:NFIA_100430"/>
<dbReference type="VEuPathDB" id="FungiDB:NFIA_100430"/>
<dbReference type="eggNOG" id="ENOG502QR4D">
    <property type="taxonomic scope" value="Eukaryota"/>
</dbReference>
<dbReference type="HOGENOM" id="CLU_004542_2_3_1"/>
<dbReference type="OMA" id="YERGYAM"/>
<dbReference type="OrthoDB" id="416222at2759"/>
<dbReference type="UniPathway" id="UPA00696"/>
<dbReference type="Proteomes" id="UP000006702">
    <property type="component" value="Unassembled WGS sequence"/>
</dbReference>
<dbReference type="GO" id="GO:0005576">
    <property type="term" value="C:extracellular region"/>
    <property type="evidence" value="ECO:0007669"/>
    <property type="project" value="UniProtKB-SubCell"/>
</dbReference>
<dbReference type="GO" id="GO:0008422">
    <property type="term" value="F:beta-glucosidase activity"/>
    <property type="evidence" value="ECO:0007669"/>
    <property type="project" value="UniProtKB-EC"/>
</dbReference>
<dbReference type="GO" id="GO:0030245">
    <property type="term" value="P:cellulose catabolic process"/>
    <property type="evidence" value="ECO:0007669"/>
    <property type="project" value="UniProtKB-UniPathway"/>
</dbReference>
<dbReference type="FunFam" id="2.60.40.10:FF:000757">
    <property type="entry name" value="Beta-glucosidase G"/>
    <property type="match status" value="1"/>
</dbReference>
<dbReference type="FunFam" id="3.20.20.300:FF:000002">
    <property type="entry name" value="Probable beta-glucosidase"/>
    <property type="match status" value="1"/>
</dbReference>
<dbReference type="FunFam" id="3.40.50.1700:FF:000003">
    <property type="entry name" value="Probable beta-glucosidase"/>
    <property type="match status" value="1"/>
</dbReference>
<dbReference type="Gene3D" id="3.40.50.1700">
    <property type="entry name" value="Glycoside hydrolase family 3 C-terminal domain"/>
    <property type="match status" value="1"/>
</dbReference>
<dbReference type="Gene3D" id="3.20.20.300">
    <property type="entry name" value="Glycoside hydrolase, family 3, N-terminal domain"/>
    <property type="match status" value="1"/>
</dbReference>
<dbReference type="Gene3D" id="2.60.40.10">
    <property type="entry name" value="Immunoglobulins"/>
    <property type="match status" value="1"/>
</dbReference>
<dbReference type="InterPro" id="IPR050288">
    <property type="entry name" value="Cellulose_deg_GH3"/>
</dbReference>
<dbReference type="InterPro" id="IPR026891">
    <property type="entry name" value="Fn3-like"/>
</dbReference>
<dbReference type="InterPro" id="IPR002772">
    <property type="entry name" value="Glyco_hydro_3_C"/>
</dbReference>
<dbReference type="InterPro" id="IPR036881">
    <property type="entry name" value="Glyco_hydro_3_C_sf"/>
</dbReference>
<dbReference type="InterPro" id="IPR001764">
    <property type="entry name" value="Glyco_hydro_3_N"/>
</dbReference>
<dbReference type="InterPro" id="IPR036962">
    <property type="entry name" value="Glyco_hydro_3_N_sf"/>
</dbReference>
<dbReference type="InterPro" id="IPR017853">
    <property type="entry name" value="Glycoside_hydrolase_SF"/>
</dbReference>
<dbReference type="InterPro" id="IPR013783">
    <property type="entry name" value="Ig-like_fold"/>
</dbReference>
<dbReference type="PANTHER" id="PTHR42715">
    <property type="entry name" value="BETA-GLUCOSIDASE"/>
    <property type="match status" value="1"/>
</dbReference>
<dbReference type="PANTHER" id="PTHR42715:SF12">
    <property type="entry name" value="BETA-GLUCOSIDASE G-RELATED"/>
    <property type="match status" value="1"/>
</dbReference>
<dbReference type="Pfam" id="PF14310">
    <property type="entry name" value="Fn3-like"/>
    <property type="match status" value="1"/>
</dbReference>
<dbReference type="Pfam" id="PF00933">
    <property type="entry name" value="Glyco_hydro_3"/>
    <property type="match status" value="1"/>
</dbReference>
<dbReference type="Pfam" id="PF01915">
    <property type="entry name" value="Glyco_hydro_3_C"/>
    <property type="match status" value="1"/>
</dbReference>
<dbReference type="PRINTS" id="PR00133">
    <property type="entry name" value="GLHYDRLASE3"/>
</dbReference>
<dbReference type="SMART" id="SM01217">
    <property type="entry name" value="Fn3_like"/>
    <property type="match status" value="1"/>
</dbReference>
<dbReference type="SUPFAM" id="SSF51445">
    <property type="entry name" value="(Trans)glycosidases"/>
    <property type="match status" value="1"/>
</dbReference>
<dbReference type="SUPFAM" id="SSF52279">
    <property type="entry name" value="Beta-D-glucan exohydrolase, C-terminal domain"/>
    <property type="match status" value="1"/>
</dbReference>